<accession>A1KV60</accession>
<dbReference type="EMBL" id="AM421808">
    <property type="protein sequence ID" value="CAM10761.1"/>
    <property type="molecule type" value="Genomic_DNA"/>
</dbReference>
<dbReference type="RefSeq" id="WP_002212674.1">
    <property type="nucleotide sequence ID" value="NC_008767.1"/>
</dbReference>
<dbReference type="SMR" id="A1KV60"/>
<dbReference type="KEGG" id="nmc:NMC1568"/>
<dbReference type="HOGENOM" id="CLU_048704_0_0_4"/>
<dbReference type="Proteomes" id="UP000002286">
    <property type="component" value="Chromosome"/>
</dbReference>
<dbReference type="CDD" id="cd08025">
    <property type="entry name" value="RNR_PFL_like_DUF711"/>
    <property type="match status" value="1"/>
</dbReference>
<dbReference type="Gene3D" id="3.20.70.20">
    <property type="match status" value="1"/>
</dbReference>
<dbReference type="HAMAP" id="MF_01221">
    <property type="entry name" value="UPF0210"/>
    <property type="match status" value="1"/>
</dbReference>
<dbReference type="InterPro" id="IPR007841">
    <property type="entry name" value="UPF0210"/>
</dbReference>
<dbReference type="NCBIfam" id="NF003700">
    <property type="entry name" value="PRK05313.1"/>
    <property type="match status" value="1"/>
</dbReference>
<dbReference type="PANTHER" id="PTHR37560:SF1">
    <property type="entry name" value="UPF0210 PROTEIN MJ1665"/>
    <property type="match status" value="1"/>
</dbReference>
<dbReference type="PANTHER" id="PTHR37560">
    <property type="entry name" value="UPF0210 PROTEIN SPR0218"/>
    <property type="match status" value="1"/>
</dbReference>
<dbReference type="Pfam" id="PF05167">
    <property type="entry name" value="DUF711"/>
    <property type="match status" value="1"/>
</dbReference>
<dbReference type="SUPFAM" id="SSF51998">
    <property type="entry name" value="PFL-like glycyl radical enzymes"/>
    <property type="match status" value="1"/>
</dbReference>
<comment type="subunit">
    <text evidence="1">Homodimer.</text>
</comment>
<comment type="similarity">
    <text evidence="1">Belongs to the UPF0210 family.</text>
</comment>
<proteinExistence type="inferred from homology"/>
<feature type="chain" id="PRO_1000066771" description="UPF0210 protein NMC1568">
    <location>
        <begin position="1"/>
        <end position="451"/>
    </location>
</feature>
<reference key="1">
    <citation type="journal article" date="2007" name="PLoS Genet.">
        <title>Meningococcal genetic variation mechanisms viewed through comparative analysis of serogroup C strain FAM18.</title>
        <authorList>
            <person name="Bentley S.D."/>
            <person name="Vernikos G.S."/>
            <person name="Snyder L.A.S."/>
            <person name="Churcher C."/>
            <person name="Arrowsmith C."/>
            <person name="Chillingworth T."/>
            <person name="Cronin A."/>
            <person name="Davis P.H."/>
            <person name="Holroyd N.E."/>
            <person name="Jagels K."/>
            <person name="Maddison M."/>
            <person name="Moule S."/>
            <person name="Rabbinowitsch E."/>
            <person name="Sharp S."/>
            <person name="Unwin L."/>
            <person name="Whitehead S."/>
            <person name="Quail M.A."/>
            <person name="Achtman M."/>
            <person name="Barrell B.G."/>
            <person name="Saunders N.J."/>
            <person name="Parkhill J."/>
        </authorList>
    </citation>
    <scope>NUCLEOTIDE SEQUENCE [LARGE SCALE GENOMIC DNA]</scope>
    <source>
        <strain>ATCC 700532 / DSM 15464 / FAM18</strain>
    </source>
</reference>
<evidence type="ECO:0000255" key="1">
    <source>
        <dbReference type="HAMAP-Rule" id="MF_01221"/>
    </source>
</evidence>
<sequence>MSIQSGEILETVKMVADQNFDVRTITIGIDLHDCISTDIDVLNQNIYNKITTVGKDLVATAKYLSAKYGVPIVNQRISVTPIAQIAAASKADSYVSVAQTLDKAAKAIGVSFIGGFSALVQKGMSPSDEVLIRSIPEAMKTTDIVCSSINVGSTRAGINMDAVKLAGETIKRTAEITPEGFGCAKIVVFCNAVEDNPFMAGAFHGSGEADAVINVGVSGPGVVKAALENSDATTLTEVAEVVKKTAFKITRVGELIGREASKMLNIPFGILDLSLAPTPAVGDSVARILEEMGLSVCGTHGTTAALALLNDAVKKGGMMASSAVGGLSGAFIPVSEDEGMIAAAEAGVLTLDKLEAMTAVCSVGLDMIAVPGDTPAHTISGIIADEAAIGMINSKTTAVRIIPVTGKTVGDSVEFGGLLGYAPVMPVKEGSCEVFVNRGGRIPAPVQSMKN</sequence>
<name>Y1568_NEIMF</name>
<gene>
    <name type="ordered locus">NMC1568</name>
</gene>
<organism>
    <name type="scientific">Neisseria meningitidis serogroup C / serotype 2a (strain ATCC 700532 / DSM 15464 / FAM18)</name>
    <dbReference type="NCBI Taxonomy" id="272831"/>
    <lineage>
        <taxon>Bacteria</taxon>
        <taxon>Pseudomonadati</taxon>
        <taxon>Pseudomonadota</taxon>
        <taxon>Betaproteobacteria</taxon>
        <taxon>Neisseriales</taxon>
        <taxon>Neisseriaceae</taxon>
        <taxon>Neisseria</taxon>
    </lineage>
</organism>
<protein>
    <recommendedName>
        <fullName evidence="1">UPF0210 protein NMC1568</fullName>
    </recommendedName>
</protein>